<accession>B7V4R0</accession>
<gene>
    <name evidence="1" type="primary">fabH</name>
    <name type="ordered locus">PLES_17311</name>
</gene>
<feature type="chain" id="PRO_1000187889" description="Beta-ketoacyl-[acyl-carrier-protein] synthase III">
    <location>
        <begin position="1"/>
        <end position="330"/>
    </location>
</feature>
<feature type="region of interest" description="ACP-binding" evidence="1">
    <location>
        <begin position="250"/>
        <end position="254"/>
    </location>
</feature>
<feature type="active site" evidence="1">
    <location>
        <position position="111"/>
    </location>
</feature>
<feature type="active site" evidence="1">
    <location>
        <position position="249"/>
    </location>
</feature>
<feature type="active site" evidence="1">
    <location>
        <position position="279"/>
    </location>
</feature>
<organism>
    <name type="scientific">Pseudomonas aeruginosa (strain LESB58)</name>
    <dbReference type="NCBI Taxonomy" id="557722"/>
    <lineage>
        <taxon>Bacteria</taxon>
        <taxon>Pseudomonadati</taxon>
        <taxon>Pseudomonadota</taxon>
        <taxon>Gammaproteobacteria</taxon>
        <taxon>Pseudomonadales</taxon>
        <taxon>Pseudomonadaceae</taxon>
        <taxon>Pseudomonas</taxon>
    </lineage>
</organism>
<evidence type="ECO:0000255" key="1">
    <source>
        <dbReference type="HAMAP-Rule" id="MF_01815"/>
    </source>
</evidence>
<protein>
    <recommendedName>
        <fullName evidence="1">Beta-ketoacyl-[acyl-carrier-protein] synthase III</fullName>
        <shortName evidence="1">Beta-ketoacyl-ACP synthase III</shortName>
        <shortName evidence="1">KAS III</shortName>
        <ecNumber evidence="1">2.3.1.180</ecNumber>
    </recommendedName>
    <alternativeName>
        <fullName evidence="1">3-oxoacyl-[acyl-carrier-protein] synthase 3</fullName>
    </alternativeName>
    <alternativeName>
        <fullName evidence="1">3-oxoacyl-[acyl-carrier-protein] synthase III</fullName>
    </alternativeName>
</protein>
<sequence>MPRAAVVCGLGSYLPEAVLSNDMLAAELDTSDAWISSRTGVRQRHIAGDLGSGDLALRAASAALASAGLERVDAVVLATSTGDFCCPATAPRVAARLGLVGALAFDLSAACTGFVYGLASVGSLISAGLADSALLVGVDTFSHTLDPADRSTRALFGDGAGAVVLRAGDAEEEGALLAFDLGSDGHQFDLLMTPAVSRAERSSGQASNYFRMDGKAVFGQAVTQMSDSVRRVLDRVGWQASDLHHLVPHQANTRILAAVADQLDLPVERVVSNIAEVGNTVAASIPLALAHGLRQGILRDGGNMVLTGFGAGLTWGSVALRWPKIVPTMD</sequence>
<keyword id="KW-0012">Acyltransferase</keyword>
<keyword id="KW-0963">Cytoplasm</keyword>
<keyword id="KW-0275">Fatty acid biosynthesis</keyword>
<keyword id="KW-0276">Fatty acid metabolism</keyword>
<keyword id="KW-0444">Lipid biosynthesis</keyword>
<keyword id="KW-0443">Lipid metabolism</keyword>
<keyword id="KW-0511">Multifunctional enzyme</keyword>
<keyword id="KW-0808">Transferase</keyword>
<dbReference type="EC" id="2.3.1.180" evidence="1"/>
<dbReference type="EMBL" id="FM209186">
    <property type="protein sequence ID" value="CAW26459.1"/>
    <property type="molecule type" value="Genomic_DNA"/>
</dbReference>
<dbReference type="RefSeq" id="WP_003091712.1">
    <property type="nucleotide sequence ID" value="NC_011770.1"/>
</dbReference>
<dbReference type="SMR" id="B7V4R0"/>
<dbReference type="KEGG" id="pag:PLES_17311"/>
<dbReference type="HOGENOM" id="CLU_039592_4_0_6"/>
<dbReference type="UniPathway" id="UPA00094"/>
<dbReference type="GO" id="GO:0005737">
    <property type="term" value="C:cytoplasm"/>
    <property type="evidence" value="ECO:0007669"/>
    <property type="project" value="UniProtKB-SubCell"/>
</dbReference>
<dbReference type="GO" id="GO:0004315">
    <property type="term" value="F:3-oxoacyl-[acyl-carrier-protein] synthase activity"/>
    <property type="evidence" value="ECO:0007669"/>
    <property type="project" value="InterPro"/>
</dbReference>
<dbReference type="GO" id="GO:0033818">
    <property type="term" value="F:beta-ketoacyl-acyl-carrier-protein synthase III activity"/>
    <property type="evidence" value="ECO:0007669"/>
    <property type="project" value="UniProtKB-UniRule"/>
</dbReference>
<dbReference type="GO" id="GO:0006633">
    <property type="term" value="P:fatty acid biosynthetic process"/>
    <property type="evidence" value="ECO:0007669"/>
    <property type="project" value="UniProtKB-UniRule"/>
</dbReference>
<dbReference type="GO" id="GO:0044550">
    <property type="term" value="P:secondary metabolite biosynthetic process"/>
    <property type="evidence" value="ECO:0007669"/>
    <property type="project" value="TreeGrafter"/>
</dbReference>
<dbReference type="CDD" id="cd00830">
    <property type="entry name" value="KAS_III"/>
    <property type="match status" value="1"/>
</dbReference>
<dbReference type="Gene3D" id="3.40.47.10">
    <property type="match status" value="1"/>
</dbReference>
<dbReference type="HAMAP" id="MF_01815">
    <property type="entry name" value="FabH"/>
    <property type="match status" value="1"/>
</dbReference>
<dbReference type="InterPro" id="IPR013747">
    <property type="entry name" value="ACP_syn_III_C"/>
</dbReference>
<dbReference type="InterPro" id="IPR013751">
    <property type="entry name" value="ACP_syn_III_N"/>
</dbReference>
<dbReference type="InterPro" id="IPR004655">
    <property type="entry name" value="FabH"/>
</dbReference>
<dbReference type="InterPro" id="IPR016039">
    <property type="entry name" value="Thiolase-like"/>
</dbReference>
<dbReference type="NCBIfam" id="TIGR00747">
    <property type="entry name" value="fabH"/>
    <property type="match status" value="1"/>
</dbReference>
<dbReference type="NCBIfam" id="NF006829">
    <property type="entry name" value="PRK09352.1"/>
    <property type="match status" value="1"/>
</dbReference>
<dbReference type="PANTHER" id="PTHR34069">
    <property type="entry name" value="3-OXOACYL-[ACYL-CARRIER-PROTEIN] SYNTHASE 3"/>
    <property type="match status" value="1"/>
</dbReference>
<dbReference type="PANTHER" id="PTHR34069:SF2">
    <property type="entry name" value="BETA-KETOACYL-[ACYL-CARRIER-PROTEIN] SYNTHASE III"/>
    <property type="match status" value="1"/>
</dbReference>
<dbReference type="Pfam" id="PF08545">
    <property type="entry name" value="ACP_syn_III"/>
    <property type="match status" value="1"/>
</dbReference>
<dbReference type="Pfam" id="PF08541">
    <property type="entry name" value="ACP_syn_III_C"/>
    <property type="match status" value="1"/>
</dbReference>
<dbReference type="SUPFAM" id="SSF53901">
    <property type="entry name" value="Thiolase-like"/>
    <property type="match status" value="1"/>
</dbReference>
<proteinExistence type="inferred from homology"/>
<comment type="function">
    <text evidence="1">Catalyzes the condensation reaction of fatty acid synthesis by the addition to an acyl acceptor of two carbons from malonyl-ACP. Catalyzes the first condensation reaction which initiates fatty acid synthesis and may therefore play a role in governing the total rate of fatty acid production. Possesses both acetoacetyl-ACP synthase and acetyl transacylase activities. Its substrate specificity determines the biosynthesis of branched-chain and/or straight-chain of fatty acids.</text>
</comment>
<comment type="catalytic activity">
    <reaction evidence="1">
        <text>malonyl-[ACP] + acetyl-CoA + H(+) = 3-oxobutanoyl-[ACP] + CO2 + CoA</text>
        <dbReference type="Rhea" id="RHEA:12080"/>
        <dbReference type="Rhea" id="RHEA-COMP:9623"/>
        <dbReference type="Rhea" id="RHEA-COMP:9625"/>
        <dbReference type="ChEBI" id="CHEBI:15378"/>
        <dbReference type="ChEBI" id="CHEBI:16526"/>
        <dbReference type="ChEBI" id="CHEBI:57287"/>
        <dbReference type="ChEBI" id="CHEBI:57288"/>
        <dbReference type="ChEBI" id="CHEBI:78449"/>
        <dbReference type="ChEBI" id="CHEBI:78450"/>
        <dbReference type="EC" id="2.3.1.180"/>
    </reaction>
</comment>
<comment type="pathway">
    <text evidence="1">Lipid metabolism; fatty acid biosynthesis.</text>
</comment>
<comment type="subunit">
    <text evidence="1">Homodimer.</text>
</comment>
<comment type="subcellular location">
    <subcellularLocation>
        <location evidence="1">Cytoplasm</location>
    </subcellularLocation>
</comment>
<comment type="domain">
    <text evidence="1">The last Arg residue of the ACP-binding site is essential for the weak association between ACP/AcpP and FabH.</text>
</comment>
<comment type="similarity">
    <text evidence="1">Belongs to the thiolase-like superfamily. FabH family.</text>
</comment>
<name>FABH_PSEA8</name>
<reference key="1">
    <citation type="journal article" date="2009" name="Genome Res.">
        <title>Newly introduced genomic prophage islands are critical determinants of in vivo competitiveness in the Liverpool epidemic strain of Pseudomonas aeruginosa.</title>
        <authorList>
            <person name="Winstanley C."/>
            <person name="Langille M.G.I."/>
            <person name="Fothergill J.L."/>
            <person name="Kukavica-Ibrulj I."/>
            <person name="Paradis-Bleau C."/>
            <person name="Sanschagrin F."/>
            <person name="Thomson N.R."/>
            <person name="Winsor G.L."/>
            <person name="Quail M.A."/>
            <person name="Lennard N."/>
            <person name="Bignell A."/>
            <person name="Clarke L."/>
            <person name="Seeger K."/>
            <person name="Saunders D."/>
            <person name="Harris D."/>
            <person name="Parkhill J."/>
            <person name="Hancock R.E.W."/>
            <person name="Brinkman F.S.L."/>
            <person name="Levesque R.C."/>
        </authorList>
    </citation>
    <scope>NUCLEOTIDE SEQUENCE [LARGE SCALE GENOMIC DNA]</scope>
    <source>
        <strain>LESB58</strain>
    </source>
</reference>